<name>CYTSA_CANLF</name>
<reference key="1">
    <citation type="submission" date="2005-01" db="EMBL/GenBank/DDBJ databases">
        <title>Characterization of cytospin A as a multiple coiled coil protein involved in cytokinesis and spindle organization.</title>
        <authorList>
            <person name="Huang C.-H."/>
            <person name="Ye T."/>
            <person name="Chen Y."/>
        </authorList>
    </citation>
    <scope>NUCLEOTIDE SEQUENCE [MRNA]</scope>
</reference>
<evidence type="ECO:0000250" key="1"/>
<evidence type="ECO:0000250" key="2">
    <source>
        <dbReference type="UniProtKB" id="Q2KN98"/>
    </source>
</evidence>
<evidence type="ECO:0000250" key="3">
    <source>
        <dbReference type="UniProtKB" id="Q69YQ0"/>
    </source>
</evidence>
<evidence type="ECO:0000255" key="4"/>
<evidence type="ECO:0000255" key="5">
    <source>
        <dbReference type="PROSITE-ProRule" id="PRU00044"/>
    </source>
</evidence>
<evidence type="ECO:0000256" key="6">
    <source>
        <dbReference type="SAM" id="MobiDB-lite"/>
    </source>
</evidence>
<evidence type="ECO:0000305" key="7"/>
<proteinExistence type="evidence at transcript level"/>
<protein>
    <recommendedName>
        <fullName>Cytospin-A</fullName>
    </recommendedName>
    <alternativeName>
        <fullName>SPECC1-like protein</fullName>
    </alternativeName>
    <alternativeName>
        <fullName>Sperm antigen with calponin homology and coiled-coil domains 1-like</fullName>
    </alternativeName>
</protein>
<gene>
    <name type="primary">SPECC1L</name>
    <name type="synonym">CYTSA</name>
</gene>
<organism>
    <name type="scientific">Canis lupus familiaris</name>
    <name type="common">Dog</name>
    <name type="synonym">Canis familiaris</name>
    <dbReference type="NCBI Taxonomy" id="9615"/>
    <lineage>
        <taxon>Eukaryota</taxon>
        <taxon>Metazoa</taxon>
        <taxon>Chordata</taxon>
        <taxon>Craniata</taxon>
        <taxon>Vertebrata</taxon>
        <taxon>Euteleostomi</taxon>
        <taxon>Mammalia</taxon>
        <taxon>Eutheria</taxon>
        <taxon>Laurasiatheria</taxon>
        <taxon>Carnivora</taxon>
        <taxon>Caniformia</taxon>
        <taxon>Canidae</taxon>
        <taxon>Canis</taxon>
    </lineage>
</organism>
<feature type="chain" id="PRO_0000231017" description="Cytospin-A">
    <location>
        <begin position="1"/>
        <end position="1117"/>
    </location>
</feature>
<feature type="domain" description="Calponin-homology (CH)" evidence="5">
    <location>
        <begin position="1011"/>
        <end position="1116"/>
    </location>
</feature>
<feature type="region of interest" description="Disordered" evidence="6">
    <location>
        <begin position="1"/>
        <end position="176"/>
    </location>
</feature>
<feature type="region of interest" description="Disordered" evidence="6">
    <location>
        <begin position="293"/>
        <end position="323"/>
    </location>
</feature>
<feature type="region of interest" description="Disordered" evidence="6">
    <location>
        <begin position="358"/>
        <end position="390"/>
    </location>
</feature>
<feature type="region of interest" description="Disordered" evidence="6">
    <location>
        <begin position="852"/>
        <end position="878"/>
    </location>
</feature>
<feature type="region of interest" description="Disordered" evidence="6">
    <location>
        <begin position="920"/>
        <end position="997"/>
    </location>
</feature>
<feature type="coiled-coil region" evidence="4">
    <location>
        <begin position="168"/>
        <end position="280"/>
    </location>
</feature>
<feature type="coiled-coil region" evidence="4">
    <location>
        <begin position="394"/>
        <end position="449"/>
    </location>
</feature>
<feature type="coiled-coil region" evidence="4">
    <location>
        <begin position="487"/>
        <end position="807"/>
    </location>
</feature>
<feature type="compositionally biased region" description="Low complexity" evidence="6">
    <location>
        <begin position="45"/>
        <end position="72"/>
    </location>
</feature>
<feature type="compositionally biased region" description="Low complexity" evidence="6">
    <location>
        <begin position="99"/>
        <end position="119"/>
    </location>
</feature>
<feature type="compositionally biased region" description="Basic and acidic residues" evidence="6">
    <location>
        <begin position="120"/>
        <end position="131"/>
    </location>
</feature>
<feature type="compositionally biased region" description="Basic and acidic residues" evidence="6">
    <location>
        <begin position="158"/>
        <end position="171"/>
    </location>
</feature>
<feature type="compositionally biased region" description="Polar residues" evidence="6">
    <location>
        <begin position="293"/>
        <end position="303"/>
    </location>
</feature>
<feature type="compositionally biased region" description="Low complexity" evidence="6">
    <location>
        <begin position="358"/>
        <end position="377"/>
    </location>
</feature>
<feature type="compositionally biased region" description="Basic and acidic residues" evidence="6">
    <location>
        <begin position="946"/>
        <end position="956"/>
    </location>
</feature>
<feature type="compositionally biased region" description="Low complexity" evidence="6">
    <location>
        <begin position="971"/>
        <end position="990"/>
    </location>
</feature>
<feature type="modified residue" description="Phosphoserine" evidence="2">
    <location>
        <position position="384"/>
    </location>
</feature>
<feature type="modified residue" description="Phosphoserine" evidence="2">
    <location>
        <position position="385"/>
    </location>
</feature>
<feature type="modified residue" description="Phosphoserine" evidence="2">
    <location>
        <position position="389"/>
    </location>
</feature>
<feature type="modified residue" description="Phosphoserine" evidence="3">
    <location>
        <position position="868"/>
    </location>
</feature>
<feature type="modified residue" description="Phosphoserine" evidence="3">
    <location>
        <position position="881"/>
    </location>
</feature>
<feature type="modified residue" description="Phosphoserine" evidence="3">
    <location>
        <position position="887"/>
    </location>
</feature>
<dbReference type="EMBL" id="AY884295">
    <property type="protein sequence ID" value="AAX84186.1"/>
    <property type="molecule type" value="mRNA"/>
</dbReference>
<dbReference type="RefSeq" id="NP_001041579.1">
    <property type="nucleotide sequence ID" value="NM_001048114.1"/>
</dbReference>
<dbReference type="RefSeq" id="XP_005636591.1">
    <property type="nucleotide sequence ID" value="XM_005636534.1"/>
</dbReference>
<dbReference type="RefSeq" id="XP_005636592.1">
    <property type="nucleotide sequence ID" value="XM_005636535.1"/>
</dbReference>
<dbReference type="RefSeq" id="XP_005636594.1">
    <property type="nucleotide sequence ID" value="XM_005636537.1"/>
</dbReference>
<dbReference type="RefSeq" id="XP_013963585.1">
    <property type="nucleotide sequence ID" value="XM_014108110.1"/>
</dbReference>
<dbReference type="RefSeq" id="XP_038292019.1">
    <property type="nucleotide sequence ID" value="XM_038436091.1"/>
</dbReference>
<dbReference type="RefSeq" id="XP_038292020.1">
    <property type="nucleotide sequence ID" value="XM_038436092.1"/>
</dbReference>
<dbReference type="RefSeq" id="XP_038292021.1">
    <property type="nucleotide sequence ID" value="XM_038436093.1"/>
</dbReference>
<dbReference type="RefSeq" id="XP_038292022.1">
    <property type="nucleotide sequence ID" value="XM_038436094.1"/>
</dbReference>
<dbReference type="RefSeq" id="XP_038292023.1">
    <property type="nucleotide sequence ID" value="XM_038436095.1"/>
</dbReference>
<dbReference type="SMR" id="Q2KNA0"/>
<dbReference type="FunCoup" id="Q2KNA0">
    <property type="interactions" value="1699"/>
</dbReference>
<dbReference type="STRING" id="9615.ENSCAFP00000020373"/>
<dbReference type="PaxDb" id="9612-ENSCAFP00000042779"/>
<dbReference type="Ensembl" id="ENSCAFT00000044866.4">
    <property type="protein sequence ID" value="ENSCAFP00000042779.3"/>
    <property type="gene ID" value="ENSCAFG00000013823.6"/>
</dbReference>
<dbReference type="Ensembl" id="ENSCAFT00040033613.1">
    <property type="protein sequence ID" value="ENSCAFP00040029250.1"/>
    <property type="gene ID" value="ENSCAFG00040018176.1"/>
</dbReference>
<dbReference type="Ensembl" id="ENSCAFT00845039043.1">
    <property type="protein sequence ID" value="ENSCAFP00845030582.1"/>
    <property type="gene ID" value="ENSCAFG00845022108.1"/>
</dbReference>
<dbReference type="GeneID" id="486397"/>
<dbReference type="KEGG" id="cfa:486397"/>
<dbReference type="CTD" id="23384"/>
<dbReference type="VEuPathDB" id="HostDB:ENSCAFG00845022108"/>
<dbReference type="eggNOG" id="KOG4678">
    <property type="taxonomic scope" value="Eukaryota"/>
</dbReference>
<dbReference type="GeneTree" id="ENSGT00940000153592"/>
<dbReference type="HOGENOM" id="CLU_009328_1_0_1"/>
<dbReference type="InParanoid" id="Q2KNA0"/>
<dbReference type="OMA" id="AMNSVET"/>
<dbReference type="OrthoDB" id="21607at2759"/>
<dbReference type="TreeFam" id="TF316716"/>
<dbReference type="Proteomes" id="UP000002254">
    <property type="component" value="Chromosome 26"/>
</dbReference>
<dbReference type="Proteomes" id="UP000694429">
    <property type="component" value="Unplaced"/>
</dbReference>
<dbReference type="Proteomes" id="UP000694542">
    <property type="component" value="Chromosome 26"/>
</dbReference>
<dbReference type="Proteomes" id="UP000805418">
    <property type="component" value="Chromosome 26"/>
</dbReference>
<dbReference type="Bgee" id="ENSCAFG00000013823">
    <property type="expression patterns" value="Expressed in lung and 48 other cell types or tissues"/>
</dbReference>
<dbReference type="GO" id="GO:0005737">
    <property type="term" value="C:cytoplasm"/>
    <property type="evidence" value="ECO:0007669"/>
    <property type="project" value="UniProtKB-KW"/>
</dbReference>
<dbReference type="GO" id="GO:0031941">
    <property type="term" value="C:filamentous actin"/>
    <property type="evidence" value="ECO:0000318"/>
    <property type="project" value="GO_Central"/>
</dbReference>
<dbReference type="GO" id="GO:0005921">
    <property type="term" value="C:gap junction"/>
    <property type="evidence" value="ECO:0007669"/>
    <property type="project" value="UniProtKB-SubCell"/>
</dbReference>
<dbReference type="GO" id="GO:0005815">
    <property type="term" value="C:microtubule organizing center"/>
    <property type="evidence" value="ECO:0000318"/>
    <property type="project" value="GO_Central"/>
</dbReference>
<dbReference type="GO" id="GO:0005819">
    <property type="term" value="C:spindle"/>
    <property type="evidence" value="ECO:0007669"/>
    <property type="project" value="UniProtKB-SubCell"/>
</dbReference>
<dbReference type="GO" id="GO:0008013">
    <property type="term" value="F:beta-catenin binding"/>
    <property type="evidence" value="ECO:0007669"/>
    <property type="project" value="Ensembl"/>
</dbReference>
<dbReference type="GO" id="GO:0030036">
    <property type="term" value="P:actin cytoskeleton organization"/>
    <property type="evidence" value="ECO:0000318"/>
    <property type="project" value="GO_Central"/>
</dbReference>
<dbReference type="GO" id="GO:0034332">
    <property type="term" value="P:adherens junction organization"/>
    <property type="evidence" value="ECO:0007669"/>
    <property type="project" value="Ensembl"/>
</dbReference>
<dbReference type="GO" id="GO:0061713">
    <property type="term" value="P:anterior neural tube closure"/>
    <property type="evidence" value="ECO:0007669"/>
    <property type="project" value="Ensembl"/>
</dbReference>
<dbReference type="GO" id="GO:0051301">
    <property type="term" value="P:cell division"/>
    <property type="evidence" value="ECO:0007669"/>
    <property type="project" value="UniProtKB-KW"/>
</dbReference>
<dbReference type="GO" id="GO:0016477">
    <property type="term" value="P:cell migration"/>
    <property type="evidence" value="ECO:0007669"/>
    <property type="project" value="Ensembl"/>
</dbReference>
<dbReference type="GO" id="GO:0030835">
    <property type="term" value="P:negative regulation of actin filament depolymerization"/>
    <property type="evidence" value="ECO:0007669"/>
    <property type="project" value="Ensembl"/>
</dbReference>
<dbReference type="GO" id="GO:0007026">
    <property type="term" value="P:negative regulation of microtubule depolymerization"/>
    <property type="evidence" value="ECO:0007669"/>
    <property type="project" value="Ensembl"/>
</dbReference>
<dbReference type="GO" id="GO:0036032">
    <property type="term" value="P:neural crest cell delamination"/>
    <property type="evidence" value="ECO:0007669"/>
    <property type="project" value="Ensembl"/>
</dbReference>
<dbReference type="GO" id="GO:0051897">
    <property type="term" value="P:positive regulation of phosphatidylinositol 3-kinase/protein kinase B signal transduction"/>
    <property type="evidence" value="ECO:0007669"/>
    <property type="project" value="Ensembl"/>
</dbReference>
<dbReference type="CDD" id="cd21199">
    <property type="entry name" value="CH_CYTS"/>
    <property type="match status" value="1"/>
</dbReference>
<dbReference type="FunFam" id="1.10.418.10:FF:000020">
    <property type="entry name" value="Cytospin-A isoform 1"/>
    <property type="match status" value="1"/>
</dbReference>
<dbReference type="Gene3D" id="1.10.418.10">
    <property type="entry name" value="Calponin-like domain"/>
    <property type="match status" value="1"/>
</dbReference>
<dbReference type="InterPro" id="IPR001715">
    <property type="entry name" value="CH_dom"/>
</dbReference>
<dbReference type="InterPro" id="IPR036872">
    <property type="entry name" value="CH_dom_sf"/>
</dbReference>
<dbReference type="InterPro" id="IPR050540">
    <property type="entry name" value="F-actin_Monoox_Mical"/>
</dbReference>
<dbReference type="PANTHER" id="PTHR23167">
    <property type="entry name" value="CALPONIN HOMOLOGY DOMAIN-CONTAINING PROTEIN DDB_G0272472-RELATED"/>
    <property type="match status" value="1"/>
</dbReference>
<dbReference type="PANTHER" id="PTHR23167:SF18">
    <property type="entry name" value="CYTOSPIN-A"/>
    <property type="match status" value="1"/>
</dbReference>
<dbReference type="Pfam" id="PF00307">
    <property type="entry name" value="CH"/>
    <property type="match status" value="1"/>
</dbReference>
<dbReference type="SMART" id="SM00033">
    <property type="entry name" value="CH"/>
    <property type="match status" value="1"/>
</dbReference>
<dbReference type="SUPFAM" id="SSF47576">
    <property type="entry name" value="Calponin-homology domain, CH-domain"/>
    <property type="match status" value="1"/>
</dbReference>
<dbReference type="PROSITE" id="PS50021">
    <property type="entry name" value="CH"/>
    <property type="match status" value="1"/>
</dbReference>
<keyword id="KW-0131">Cell cycle</keyword>
<keyword id="KW-0132">Cell division</keyword>
<keyword id="KW-0965">Cell junction</keyword>
<keyword id="KW-0175">Coiled coil</keyword>
<keyword id="KW-0963">Cytoplasm</keyword>
<keyword id="KW-0206">Cytoskeleton</keyword>
<keyword id="KW-0303">Gap junction</keyword>
<keyword id="KW-0597">Phosphoprotein</keyword>
<keyword id="KW-1185">Reference proteome</keyword>
<accession>Q2KNA0</accession>
<comment type="function">
    <text evidence="1">Involved in cytokinesis and spindle organization. May play a role in actin cytoskeleton organization and microtubule stabilization and hence required for proper cell adhesion and migration (By similarity).</text>
</comment>
<comment type="subunit">
    <text evidence="1">May interact with both microtubules and actin cytoskeleton.</text>
</comment>
<comment type="subcellular location">
    <subcellularLocation>
        <location evidence="1">Cytoplasm</location>
        <location evidence="1">Cytoskeleton</location>
    </subcellularLocation>
    <subcellularLocation>
        <location evidence="1">Cytoplasm</location>
        <location evidence="1">Cytoskeleton</location>
        <location evidence="1">Spindle</location>
    </subcellularLocation>
    <subcellularLocation>
        <location evidence="1">Cell junction</location>
        <location evidence="1">Gap junction</location>
    </subcellularLocation>
    <text evidence="1">Colocalizes with beta-tubulin, acetylated alpha-tubulin and F-actin. Also observed in a ring around gamma-tubulin containing centrioles possibly in the microtubule organizing center (By similarity).</text>
</comment>
<comment type="similarity">
    <text evidence="7">Belongs to the cytospin-A family.</text>
</comment>
<sequence>MKKASRSVGSVPKVSGISKTQTVEKTKPENSSSASTGGKVIKTGTTASLSKTKSSDDLLAGMAGGVTVTNGVKGKKSTCPSTGSSASAPAMTTVENKSKISTGTSSSTKRSTSIGNKESSSTRERLRERTRLNQSKKLPSAGQGANDVALAKRSRSRTTTECDVRMSKSKSDNQISDKAALEAKVKDLLTLAKTKDVEILHLRNELRDMRAQLGINEDHSEGDEKSEKEAIIAHQPTDVESTLLQLQEQNTAIREELNQLKNENRMLKDRLNALGFSLEQRLDNSEKLFGYQSLSPEITPGNQSDGGGTLTSSVEGSAPGSVEDLLSQDENTLMDHQHSNSMDNLDSECSEVYQPLTSSDDALDAPSSSESEGIPSIERSRKGSSGNASEVSVACLTERIHQMEENQHSTSEELQATLQELADLQQITQELNSENERLGEEKVILMESLCQQSDKLEHFSRQIEYFRSLLDEHHISYVIDEDVKSGRYMELEQRYMDLAENARFEREQLLGVQQHLSNTLKMAEQDNKEAQEMIGALKERNHHMERIIESEQKGKAALAATLEEYKATVASDQIEMNRLKAQLENEKQKVAELYSIHNSGDKSDIQDLLESVRLDKEKAETLASSLQEDLAHTRNDANRLQDTIAKVEDEYRAFQEEAKKQIEELNMTLEKLRSELEEKETERSDMKETIFELEDEVEQHRAVKLHDNLIISDLENTVKKLQDQKHDMEREIKTLHRRLREESAEWRQFQADLQTAVVIANDIKSEAQEEIGDLKRRLHEAQEKNEKLTKELEEIKSRKQEEERGRVYNYMNAVERDLAALRQGMGLSRRSSTSSEPTPTVKTLIKSFDSASQVPNPTAAAIPRTPLSPSPMKTPPAAAVSPMQRHSISGPISTSKPLTALSDKRPNYGEIPVQEHLLRTSSTSRPASLPRVPAMESAKTISVSRRSSEEMKRDISAPEGASPASLMAMGTTSPQLSLSSSPTASVTPTTRSRIREERKDPLSALAREYGGSKRNALLKWCQKKTEGYQNIDITNFSSSWNDGLAFCALLHTYLPAHIPYQELNSQDKRRNFTLAFQAAESVGIKSTLDINEMVRTERPDWQSVMLYVTAIYKYFET</sequence>